<organismHost>
    <name type="scientific">Homo sapiens</name>
    <name type="common">Human</name>
    <dbReference type="NCBI Taxonomy" id="9606"/>
</organismHost>
<dbReference type="EMBL" id="M28127">
    <property type="protein sequence ID" value="AAA45937.1"/>
    <property type="molecule type" value="Genomic_DNA"/>
</dbReference>
<dbReference type="PIR" id="A32390">
    <property type="entry name" value="VGBE48"/>
</dbReference>
<dbReference type="GlyCosmos" id="P17175">
    <property type="glycosylation" value="10 sites, No reported glycans"/>
</dbReference>
<dbReference type="GO" id="GO:0016020">
    <property type="term" value="C:membrane"/>
    <property type="evidence" value="ECO:0007669"/>
    <property type="project" value="UniProtKB-KW"/>
</dbReference>
<dbReference type="GO" id="GO:0055036">
    <property type="term" value="C:virion membrane"/>
    <property type="evidence" value="ECO:0007669"/>
    <property type="project" value="UniProtKB-SubCell"/>
</dbReference>
<accession>P17175</accession>
<gene>
    <name type="primary">UL4</name>
</gene>
<reference key="1">
    <citation type="journal article" date="1989" name="J. Virol.">
        <title>Identification and expression of a human cytomegalovirus early glycoprotein.</title>
        <authorList>
            <person name="Chang C.-P."/>
            <person name="Vesole D.H."/>
            <person name="Nelson J."/>
            <person name="Oldstone M.B.A."/>
            <person name="Stinski M.F."/>
        </authorList>
    </citation>
    <scope>NUCLEOTIDE SEQUENCE [GENOMIC DNA]</scope>
</reference>
<comment type="subcellular location">
    <subcellularLocation>
        <location evidence="2">Virion membrane</location>
        <topology evidence="2">Peripheral membrane protein</topology>
    </subcellularLocation>
</comment>
<comment type="PTM">
    <text>N-glycosylated and possibly O-glycosylated.</text>
</comment>
<comment type="similarity">
    <text evidence="2">Belongs to the RL11 family.</text>
</comment>
<name>UL04_HCMVT</name>
<sequence length="148" mass="17151">MMLRAWRLMVLLAAYCYYVFANCSISTTTAPVEWKSPNRQIPKNITCANYSGTVGGNVTFQGLKNKTEDFLSWLLGSGYKSICSFFPQLPGDSNEQHYRYEVTNLTYNCTYDRLTLLNLTTENSRNYYFRREDANSTFYYSCYNLTVS</sequence>
<feature type="signal peptide" evidence="1">
    <location>
        <begin position="1"/>
        <end position="21"/>
    </location>
</feature>
<feature type="chain" id="PRO_0000037447" description="Early glycoprotein GP48">
    <location>
        <begin position="22"/>
        <end position="148"/>
    </location>
</feature>
<feature type="glycosylation site" description="N-linked (GlcNAc...) asparagine; by host" evidence="1">
    <location>
        <position position="22"/>
    </location>
</feature>
<feature type="glycosylation site" description="N-linked (GlcNAc...) asparagine; by host" evidence="1">
    <location>
        <position position="44"/>
    </location>
</feature>
<feature type="glycosylation site" description="N-linked (GlcNAc...) asparagine; by host" evidence="1">
    <location>
        <position position="49"/>
    </location>
</feature>
<feature type="glycosylation site" description="N-linked (GlcNAc...) asparagine; by host" evidence="1">
    <location>
        <position position="57"/>
    </location>
</feature>
<feature type="glycosylation site" description="N-linked (GlcNAc...) asparagine; by host" evidence="1">
    <location>
        <position position="65"/>
    </location>
</feature>
<feature type="glycosylation site" description="N-linked (GlcNAc...) asparagine; by host" evidence="1">
    <location>
        <position position="104"/>
    </location>
</feature>
<feature type="glycosylation site" description="N-linked (GlcNAc...) asparagine; by host" evidence="1">
    <location>
        <position position="108"/>
    </location>
</feature>
<feature type="glycosylation site" description="N-linked (GlcNAc...) asparagine; by host" evidence="1">
    <location>
        <position position="118"/>
    </location>
</feature>
<feature type="glycosylation site" description="N-linked (GlcNAc...) asparagine; by host" evidence="1">
    <location>
        <position position="135"/>
    </location>
</feature>
<feature type="glycosylation site" description="N-linked (GlcNAc...) asparagine; by host" evidence="1">
    <location>
        <position position="144"/>
    </location>
</feature>
<protein>
    <recommendedName>
        <fullName>Early glycoprotein GP48</fullName>
    </recommendedName>
</protein>
<organism>
    <name type="scientific">Human cytomegalovirus (strain Towne)</name>
    <name type="common">HHV-5</name>
    <name type="synonym">Human herpesvirus 5</name>
    <dbReference type="NCBI Taxonomy" id="10363"/>
    <lineage>
        <taxon>Viruses</taxon>
        <taxon>Duplodnaviria</taxon>
        <taxon>Heunggongvirae</taxon>
        <taxon>Peploviricota</taxon>
        <taxon>Herviviricetes</taxon>
        <taxon>Herpesvirales</taxon>
        <taxon>Orthoherpesviridae</taxon>
        <taxon>Betaherpesvirinae</taxon>
        <taxon>Cytomegalovirus</taxon>
        <taxon>Cytomegalovirus humanbeta5</taxon>
        <taxon>Human cytomegalovirus</taxon>
    </lineage>
</organism>
<proteinExistence type="inferred from homology"/>
<evidence type="ECO:0000255" key="1"/>
<evidence type="ECO:0000305" key="2"/>
<keyword id="KW-0244">Early protein</keyword>
<keyword id="KW-0325">Glycoprotein</keyword>
<keyword id="KW-0472">Membrane</keyword>
<keyword id="KW-0732">Signal</keyword>
<keyword id="KW-0946">Virion</keyword>